<protein>
    <recommendedName>
        <fullName evidence="1">Orotidine 5'-phosphate decarboxylase</fullName>
        <ecNumber evidence="1">4.1.1.23</ecNumber>
    </recommendedName>
    <alternativeName>
        <fullName evidence="1">OMP decarboxylase</fullName>
        <shortName evidence="1">OMPDCase</shortName>
        <shortName evidence="1">OMPdecase</shortName>
    </alternativeName>
</protein>
<organism>
    <name type="scientific">Geobacillus kaustophilus (strain HTA426)</name>
    <dbReference type="NCBI Taxonomy" id="235909"/>
    <lineage>
        <taxon>Bacteria</taxon>
        <taxon>Bacillati</taxon>
        <taxon>Bacillota</taxon>
        <taxon>Bacilli</taxon>
        <taxon>Bacillales</taxon>
        <taxon>Anoxybacillaceae</taxon>
        <taxon>Geobacillus</taxon>
        <taxon>Geobacillus thermoleovorans group</taxon>
    </lineage>
</organism>
<dbReference type="EC" id="4.1.1.23" evidence="1"/>
<dbReference type="EMBL" id="BA000043">
    <property type="protein sequence ID" value="BAD75440.1"/>
    <property type="molecule type" value="Genomic_DNA"/>
</dbReference>
<dbReference type="RefSeq" id="WP_011230655.1">
    <property type="nucleotide sequence ID" value="NC_006510.1"/>
</dbReference>
<dbReference type="PDB" id="2YYT">
    <property type="method" value="X-ray"/>
    <property type="resolution" value="2.30 A"/>
    <property type="chains" value="A/B/C/D=1-244"/>
</dbReference>
<dbReference type="PDB" id="2YYU">
    <property type="method" value="X-ray"/>
    <property type="resolution" value="2.20 A"/>
    <property type="chains" value="A/B=1-244"/>
</dbReference>
<dbReference type="PDBsum" id="2YYT"/>
<dbReference type="PDBsum" id="2YYU"/>
<dbReference type="SMR" id="Q5L0U0"/>
<dbReference type="STRING" id="235909.GK1155"/>
<dbReference type="KEGG" id="gka:GK1155"/>
<dbReference type="PATRIC" id="fig|235909.7.peg.1256"/>
<dbReference type="eggNOG" id="COG0284">
    <property type="taxonomic scope" value="Bacteria"/>
</dbReference>
<dbReference type="HOGENOM" id="CLU_067069_1_1_9"/>
<dbReference type="UniPathway" id="UPA00070">
    <property type="reaction ID" value="UER00120"/>
</dbReference>
<dbReference type="EvolutionaryTrace" id="Q5L0U0"/>
<dbReference type="Proteomes" id="UP000001172">
    <property type="component" value="Chromosome"/>
</dbReference>
<dbReference type="GO" id="GO:0005829">
    <property type="term" value="C:cytosol"/>
    <property type="evidence" value="ECO:0007669"/>
    <property type="project" value="TreeGrafter"/>
</dbReference>
<dbReference type="GO" id="GO:0004590">
    <property type="term" value="F:orotidine-5'-phosphate decarboxylase activity"/>
    <property type="evidence" value="ECO:0007669"/>
    <property type="project" value="UniProtKB-UniRule"/>
</dbReference>
<dbReference type="GO" id="GO:0006207">
    <property type="term" value="P:'de novo' pyrimidine nucleobase biosynthetic process"/>
    <property type="evidence" value="ECO:0007669"/>
    <property type="project" value="InterPro"/>
</dbReference>
<dbReference type="GO" id="GO:0044205">
    <property type="term" value="P:'de novo' UMP biosynthetic process"/>
    <property type="evidence" value="ECO:0007669"/>
    <property type="project" value="UniProtKB-UniRule"/>
</dbReference>
<dbReference type="CDD" id="cd04725">
    <property type="entry name" value="OMP_decarboxylase_like"/>
    <property type="match status" value="1"/>
</dbReference>
<dbReference type="FunFam" id="3.20.20.70:FF:000015">
    <property type="entry name" value="Orotidine 5'-phosphate decarboxylase"/>
    <property type="match status" value="1"/>
</dbReference>
<dbReference type="Gene3D" id="3.20.20.70">
    <property type="entry name" value="Aldolase class I"/>
    <property type="match status" value="1"/>
</dbReference>
<dbReference type="HAMAP" id="MF_01200_B">
    <property type="entry name" value="OMPdecase_type1_B"/>
    <property type="match status" value="1"/>
</dbReference>
<dbReference type="InterPro" id="IPR013785">
    <property type="entry name" value="Aldolase_TIM"/>
</dbReference>
<dbReference type="InterPro" id="IPR014732">
    <property type="entry name" value="OMPdecase"/>
</dbReference>
<dbReference type="InterPro" id="IPR018089">
    <property type="entry name" value="OMPdecase_AS"/>
</dbReference>
<dbReference type="InterPro" id="IPR047596">
    <property type="entry name" value="OMPdecase_bac"/>
</dbReference>
<dbReference type="InterPro" id="IPR001754">
    <property type="entry name" value="OMPdeCOase_dom"/>
</dbReference>
<dbReference type="InterPro" id="IPR011060">
    <property type="entry name" value="RibuloseP-bd_barrel"/>
</dbReference>
<dbReference type="NCBIfam" id="NF001273">
    <property type="entry name" value="PRK00230.1"/>
    <property type="match status" value="1"/>
</dbReference>
<dbReference type="NCBIfam" id="TIGR01740">
    <property type="entry name" value="pyrF"/>
    <property type="match status" value="1"/>
</dbReference>
<dbReference type="PANTHER" id="PTHR32119">
    <property type="entry name" value="OROTIDINE 5'-PHOSPHATE DECARBOXYLASE"/>
    <property type="match status" value="1"/>
</dbReference>
<dbReference type="PANTHER" id="PTHR32119:SF2">
    <property type="entry name" value="OROTIDINE 5'-PHOSPHATE DECARBOXYLASE"/>
    <property type="match status" value="1"/>
</dbReference>
<dbReference type="Pfam" id="PF00215">
    <property type="entry name" value="OMPdecase"/>
    <property type="match status" value="1"/>
</dbReference>
<dbReference type="SMART" id="SM00934">
    <property type="entry name" value="OMPdecase"/>
    <property type="match status" value="1"/>
</dbReference>
<dbReference type="SUPFAM" id="SSF51366">
    <property type="entry name" value="Ribulose-phoshate binding barrel"/>
    <property type="match status" value="1"/>
</dbReference>
<dbReference type="PROSITE" id="PS00156">
    <property type="entry name" value="OMPDECASE"/>
    <property type="match status" value="1"/>
</dbReference>
<name>PYRF_GEOKA</name>
<comment type="function">
    <text evidence="1">Catalyzes the decarboxylation of orotidine 5'-monophosphate (OMP) to uridine 5'-monophosphate (UMP).</text>
</comment>
<comment type="catalytic activity">
    <reaction evidence="1">
        <text>orotidine 5'-phosphate + H(+) = UMP + CO2</text>
        <dbReference type="Rhea" id="RHEA:11596"/>
        <dbReference type="ChEBI" id="CHEBI:15378"/>
        <dbReference type="ChEBI" id="CHEBI:16526"/>
        <dbReference type="ChEBI" id="CHEBI:57538"/>
        <dbReference type="ChEBI" id="CHEBI:57865"/>
        <dbReference type="EC" id="4.1.1.23"/>
    </reaction>
</comment>
<comment type="pathway">
    <text evidence="1">Pyrimidine metabolism; UMP biosynthesis via de novo pathway; UMP from orotate: step 2/2.</text>
</comment>
<comment type="subunit">
    <text evidence="1">Homodimer.</text>
</comment>
<comment type="similarity">
    <text evidence="1">Belongs to the OMP decarboxylase family. Type 1 subfamily.</text>
</comment>
<accession>Q5L0U0</accession>
<keyword id="KW-0002">3D-structure</keyword>
<keyword id="KW-0210">Decarboxylase</keyword>
<keyword id="KW-0456">Lyase</keyword>
<keyword id="KW-0665">Pyrimidine biosynthesis</keyword>
<keyword id="KW-1185">Reference proteome</keyword>
<feature type="chain" id="PRO_0000241860" description="Orotidine 5'-phosphate decarboxylase">
    <location>
        <begin position="1"/>
        <end position="244"/>
    </location>
</feature>
<feature type="active site" description="Proton donor" evidence="1">
    <location>
        <position position="61"/>
    </location>
</feature>
<feature type="binding site" evidence="1">
    <location>
        <position position="10"/>
    </location>
    <ligand>
        <name>substrate</name>
    </ligand>
</feature>
<feature type="binding site" evidence="1">
    <location>
        <position position="32"/>
    </location>
    <ligand>
        <name>substrate</name>
    </ligand>
</feature>
<feature type="binding site" evidence="1">
    <location>
        <begin position="59"/>
        <end position="68"/>
    </location>
    <ligand>
        <name>substrate</name>
    </ligand>
</feature>
<feature type="binding site" evidence="1">
    <location>
        <position position="122"/>
    </location>
    <ligand>
        <name>substrate</name>
    </ligand>
</feature>
<feature type="binding site" evidence="1">
    <location>
        <position position="184"/>
    </location>
    <ligand>
        <name>substrate</name>
    </ligand>
</feature>
<feature type="binding site" evidence="1">
    <location>
        <position position="193"/>
    </location>
    <ligand>
        <name>substrate</name>
    </ligand>
</feature>
<feature type="binding site" evidence="1">
    <location>
        <position position="213"/>
    </location>
    <ligand>
        <name>substrate</name>
    </ligand>
</feature>
<feature type="binding site" evidence="1">
    <location>
        <position position="214"/>
    </location>
    <ligand>
        <name>substrate</name>
    </ligand>
</feature>
<feature type="strand" evidence="2">
    <location>
        <begin position="5"/>
        <end position="8"/>
    </location>
</feature>
<feature type="helix" evidence="2">
    <location>
        <begin position="14"/>
        <end position="21"/>
    </location>
</feature>
<feature type="helix" evidence="2">
    <location>
        <begin position="22"/>
        <end position="24"/>
    </location>
</feature>
<feature type="strand" evidence="2">
    <location>
        <begin position="30"/>
        <end position="33"/>
    </location>
</feature>
<feature type="helix" evidence="2">
    <location>
        <begin position="35"/>
        <end position="41"/>
    </location>
</feature>
<feature type="helix" evidence="2">
    <location>
        <begin position="43"/>
        <end position="51"/>
    </location>
</feature>
<feature type="strand" evidence="2">
    <location>
        <begin position="55"/>
        <end position="62"/>
    </location>
</feature>
<feature type="helix" evidence="2">
    <location>
        <begin position="66"/>
        <end position="78"/>
    </location>
</feature>
<feature type="strand" evidence="2">
    <location>
        <begin position="82"/>
        <end position="87"/>
    </location>
</feature>
<feature type="helix" evidence="2">
    <location>
        <begin position="88"/>
        <end position="90"/>
    </location>
</feature>
<feature type="helix" evidence="2">
    <location>
        <begin position="92"/>
        <end position="105"/>
    </location>
</feature>
<feature type="strand" evidence="2">
    <location>
        <begin position="108"/>
        <end position="110"/>
    </location>
</feature>
<feature type="strand" evidence="2">
    <location>
        <begin position="114"/>
        <end position="120"/>
    </location>
</feature>
<feature type="helix" evidence="2">
    <location>
        <begin position="126"/>
        <end position="131"/>
    </location>
</feature>
<feature type="helix" evidence="2">
    <location>
        <begin position="139"/>
        <end position="153"/>
    </location>
</feature>
<feature type="strand" evidence="2">
    <location>
        <begin position="157"/>
        <end position="159"/>
    </location>
</feature>
<feature type="helix" evidence="2">
    <location>
        <begin position="162"/>
        <end position="172"/>
    </location>
</feature>
<feature type="strand" evidence="2">
    <location>
        <begin position="176"/>
        <end position="180"/>
    </location>
</feature>
<feature type="helix" evidence="2">
    <location>
        <begin position="199"/>
        <end position="205"/>
    </location>
</feature>
<feature type="strand" evidence="2">
    <location>
        <begin position="208"/>
        <end position="212"/>
    </location>
</feature>
<feature type="helix" evidence="2">
    <location>
        <begin position="214"/>
        <end position="217"/>
    </location>
</feature>
<feature type="strand" evidence="2">
    <location>
        <begin position="219"/>
        <end position="221"/>
    </location>
</feature>
<feature type="helix" evidence="2">
    <location>
        <begin position="222"/>
        <end position="232"/>
    </location>
</feature>
<gene>
    <name evidence="1" type="primary">pyrF</name>
    <name type="ordered locus">GK1155</name>
</gene>
<reference key="1">
    <citation type="journal article" date="2004" name="Nucleic Acids Res.">
        <title>Thermoadaptation trait revealed by the genome sequence of thermophilic Geobacillus kaustophilus.</title>
        <authorList>
            <person name="Takami H."/>
            <person name="Takaki Y."/>
            <person name="Chee G.-J."/>
            <person name="Nishi S."/>
            <person name="Shimamura S."/>
            <person name="Suzuki H."/>
            <person name="Matsui S."/>
            <person name="Uchiyama I."/>
        </authorList>
    </citation>
    <scope>NUCLEOTIDE SEQUENCE [LARGE SCALE GENOMIC DNA]</scope>
    <source>
        <strain>HTA426</strain>
    </source>
</reference>
<evidence type="ECO:0000255" key="1">
    <source>
        <dbReference type="HAMAP-Rule" id="MF_01200"/>
    </source>
</evidence>
<evidence type="ECO:0007829" key="2">
    <source>
        <dbReference type="PDB" id="2YYU"/>
    </source>
</evidence>
<sequence>MHTPFIVALDFPSKQEVERFLRPFAGTPLFVKVGMELYYQEGPAIVAFLKEQGHAVFLDLKLHDIPNTVKQAMKGLARVGADLVNVHAAGGRRMMEAAIEGLDAGTPSGRMRPRCIAVTQLTSTDERMLHEELWISRPLVETVAHYAALAKESGLDGVVCSANEAAFIKERCGASFLAVTPGIRFADDAAHDQVRVVTPRKARALGSDYIVIGRSLTRAADPLRTYARLQHEWNGGERESTTPT</sequence>
<proteinExistence type="evidence at protein level"/>